<proteinExistence type="inferred from homology"/>
<organism>
    <name type="scientific">Shewanella oneidensis (strain ATCC 700550 / JCM 31522 / CIP 106686 / LMG 19005 / NCIMB 14063 / MR-1)</name>
    <dbReference type="NCBI Taxonomy" id="211586"/>
    <lineage>
        <taxon>Bacteria</taxon>
        <taxon>Pseudomonadati</taxon>
        <taxon>Pseudomonadota</taxon>
        <taxon>Gammaproteobacteria</taxon>
        <taxon>Alteromonadales</taxon>
        <taxon>Shewanellaceae</taxon>
        <taxon>Shewanella</taxon>
    </lineage>
</organism>
<feature type="chain" id="PRO_0000104803" description="Large ribosomal subunit protein uL15">
    <location>
        <begin position="1"/>
        <end position="144"/>
    </location>
</feature>
<feature type="region of interest" description="Disordered" evidence="2">
    <location>
        <begin position="1"/>
        <end position="54"/>
    </location>
</feature>
<feature type="compositionally biased region" description="Gly residues" evidence="2">
    <location>
        <begin position="21"/>
        <end position="31"/>
    </location>
</feature>
<feature type="compositionally biased region" description="Gly residues" evidence="2">
    <location>
        <begin position="42"/>
        <end position="52"/>
    </location>
</feature>
<reference key="1">
    <citation type="journal article" date="2002" name="Nat. Biotechnol.">
        <title>Genome sequence of the dissimilatory metal ion-reducing bacterium Shewanella oneidensis.</title>
        <authorList>
            <person name="Heidelberg J.F."/>
            <person name="Paulsen I.T."/>
            <person name="Nelson K.E."/>
            <person name="Gaidos E.J."/>
            <person name="Nelson W.C."/>
            <person name="Read T.D."/>
            <person name="Eisen J.A."/>
            <person name="Seshadri R."/>
            <person name="Ward N.L."/>
            <person name="Methe B.A."/>
            <person name="Clayton R.A."/>
            <person name="Meyer T."/>
            <person name="Tsapin A."/>
            <person name="Scott J."/>
            <person name="Beanan M.J."/>
            <person name="Brinkac L.M."/>
            <person name="Daugherty S.C."/>
            <person name="DeBoy R.T."/>
            <person name="Dodson R.J."/>
            <person name="Durkin A.S."/>
            <person name="Haft D.H."/>
            <person name="Kolonay J.F."/>
            <person name="Madupu R."/>
            <person name="Peterson J.D."/>
            <person name="Umayam L.A."/>
            <person name="White O."/>
            <person name="Wolf A.M."/>
            <person name="Vamathevan J.J."/>
            <person name="Weidman J.F."/>
            <person name="Impraim M."/>
            <person name="Lee K."/>
            <person name="Berry K.J."/>
            <person name="Lee C."/>
            <person name="Mueller J."/>
            <person name="Khouri H.M."/>
            <person name="Gill J."/>
            <person name="Utterback T.R."/>
            <person name="McDonald L.A."/>
            <person name="Feldblyum T.V."/>
            <person name="Smith H.O."/>
            <person name="Venter J.C."/>
            <person name="Nealson K.H."/>
            <person name="Fraser C.M."/>
        </authorList>
    </citation>
    <scope>NUCLEOTIDE SEQUENCE [LARGE SCALE GENOMIC DNA]</scope>
    <source>
        <strain>ATCC 700550 / JCM 31522 / CIP 106686 / LMG 19005 / NCIMB 14063 / MR-1</strain>
    </source>
</reference>
<sequence>MRLNTLSPAAGAKHAPKRVGRGMGSGLGKTAGRGHKGQKSRSGGGVRPGFEGGQMPLKIRLPKFGFTSRRAMVTAEVRVLELAKVNGDVIDLNALKDANVITRNIQFAKIVLSGTIERPVTVKGLKVTKGARAAIEAAGGKIEE</sequence>
<name>RL15_SHEON</name>
<comment type="function">
    <text evidence="1">Binds to the 23S rRNA.</text>
</comment>
<comment type="subunit">
    <text evidence="1">Part of the 50S ribosomal subunit.</text>
</comment>
<comment type="similarity">
    <text evidence="1">Belongs to the universal ribosomal protein uL15 family.</text>
</comment>
<keyword id="KW-1185">Reference proteome</keyword>
<keyword id="KW-0687">Ribonucleoprotein</keyword>
<keyword id="KW-0689">Ribosomal protein</keyword>
<keyword id="KW-0694">RNA-binding</keyword>
<keyword id="KW-0699">rRNA-binding</keyword>
<dbReference type="EMBL" id="AE014299">
    <property type="protein sequence ID" value="AAN53335.1"/>
    <property type="molecule type" value="Genomic_DNA"/>
</dbReference>
<dbReference type="RefSeq" id="NP_715890.1">
    <property type="nucleotide sequence ID" value="NC_004347.2"/>
</dbReference>
<dbReference type="RefSeq" id="WP_011070628.1">
    <property type="nucleotide sequence ID" value="NZ_CP053946.1"/>
</dbReference>
<dbReference type="SMR" id="Q8EK51"/>
<dbReference type="STRING" id="211586.SO_0250"/>
<dbReference type="PaxDb" id="211586-SO_0250"/>
<dbReference type="GeneID" id="94726205"/>
<dbReference type="KEGG" id="son:SO_0250"/>
<dbReference type="PATRIC" id="fig|211586.12.peg.238"/>
<dbReference type="eggNOG" id="COG0200">
    <property type="taxonomic scope" value="Bacteria"/>
</dbReference>
<dbReference type="HOGENOM" id="CLU_055188_4_2_6"/>
<dbReference type="OrthoDB" id="9810293at2"/>
<dbReference type="PhylomeDB" id="Q8EK51"/>
<dbReference type="BioCyc" id="SONE211586:G1GMP-239-MONOMER"/>
<dbReference type="Proteomes" id="UP000008186">
    <property type="component" value="Chromosome"/>
</dbReference>
<dbReference type="GO" id="GO:0022625">
    <property type="term" value="C:cytosolic large ribosomal subunit"/>
    <property type="evidence" value="ECO:0000318"/>
    <property type="project" value="GO_Central"/>
</dbReference>
<dbReference type="GO" id="GO:0019843">
    <property type="term" value="F:rRNA binding"/>
    <property type="evidence" value="ECO:0007669"/>
    <property type="project" value="UniProtKB-UniRule"/>
</dbReference>
<dbReference type="GO" id="GO:0003735">
    <property type="term" value="F:structural constituent of ribosome"/>
    <property type="evidence" value="ECO:0000318"/>
    <property type="project" value="GO_Central"/>
</dbReference>
<dbReference type="GO" id="GO:0006412">
    <property type="term" value="P:translation"/>
    <property type="evidence" value="ECO:0007669"/>
    <property type="project" value="UniProtKB-UniRule"/>
</dbReference>
<dbReference type="FunFam" id="3.100.10.10:FF:000003">
    <property type="entry name" value="50S ribosomal protein L15"/>
    <property type="match status" value="1"/>
</dbReference>
<dbReference type="Gene3D" id="3.100.10.10">
    <property type="match status" value="1"/>
</dbReference>
<dbReference type="HAMAP" id="MF_01341">
    <property type="entry name" value="Ribosomal_uL15"/>
    <property type="match status" value="1"/>
</dbReference>
<dbReference type="InterPro" id="IPR030878">
    <property type="entry name" value="Ribosomal_uL15"/>
</dbReference>
<dbReference type="InterPro" id="IPR021131">
    <property type="entry name" value="Ribosomal_uL15/eL18"/>
</dbReference>
<dbReference type="InterPro" id="IPR036227">
    <property type="entry name" value="Ribosomal_uL15/eL18_sf"/>
</dbReference>
<dbReference type="InterPro" id="IPR005749">
    <property type="entry name" value="Ribosomal_uL15_bac-type"/>
</dbReference>
<dbReference type="InterPro" id="IPR001196">
    <property type="entry name" value="Ribosomal_uL15_CS"/>
</dbReference>
<dbReference type="NCBIfam" id="TIGR01071">
    <property type="entry name" value="rplO_bact"/>
    <property type="match status" value="1"/>
</dbReference>
<dbReference type="PANTHER" id="PTHR12934">
    <property type="entry name" value="50S RIBOSOMAL PROTEIN L15"/>
    <property type="match status" value="1"/>
</dbReference>
<dbReference type="PANTHER" id="PTHR12934:SF11">
    <property type="entry name" value="LARGE RIBOSOMAL SUBUNIT PROTEIN UL15M"/>
    <property type="match status" value="1"/>
</dbReference>
<dbReference type="Pfam" id="PF00828">
    <property type="entry name" value="Ribosomal_L27A"/>
    <property type="match status" value="1"/>
</dbReference>
<dbReference type="SUPFAM" id="SSF52080">
    <property type="entry name" value="Ribosomal proteins L15p and L18e"/>
    <property type="match status" value="1"/>
</dbReference>
<dbReference type="PROSITE" id="PS00475">
    <property type="entry name" value="RIBOSOMAL_L15"/>
    <property type="match status" value="1"/>
</dbReference>
<protein>
    <recommendedName>
        <fullName evidence="1">Large ribosomal subunit protein uL15</fullName>
    </recommendedName>
    <alternativeName>
        <fullName evidence="3">50S ribosomal protein L15</fullName>
    </alternativeName>
</protein>
<accession>Q8EK51</accession>
<gene>
    <name evidence="1" type="primary">rplO</name>
    <name type="ordered locus">SO_0250</name>
</gene>
<evidence type="ECO:0000255" key="1">
    <source>
        <dbReference type="HAMAP-Rule" id="MF_01341"/>
    </source>
</evidence>
<evidence type="ECO:0000256" key="2">
    <source>
        <dbReference type="SAM" id="MobiDB-lite"/>
    </source>
</evidence>
<evidence type="ECO:0000305" key="3"/>